<evidence type="ECO:0000255" key="1">
    <source>
        <dbReference type="HAMAP-Rule" id="MF_04080"/>
    </source>
</evidence>
<feature type="chain" id="PRO_0000085444" description="Protein Vpr">
    <location>
        <begin position="1"/>
        <end position="96"/>
    </location>
</feature>
<feature type="region of interest" description="Homooligomerization" evidence="1">
    <location>
        <begin position="1"/>
        <end position="42"/>
    </location>
</feature>
<feature type="modified residue" description="Phosphoserine; by host" evidence="1">
    <location>
        <position position="79"/>
    </location>
</feature>
<feature type="modified residue" description="Phosphoserine; by host" evidence="1">
    <location>
        <position position="94"/>
    </location>
</feature>
<feature type="modified residue" description="Phosphoserine; by host" evidence="1">
    <location>
        <position position="96"/>
    </location>
</feature>
<accession>P05950</accession>
<organism>
    <name type="scientific">Human immunodeficiency virus type 1 group M subtype B (isolate MN)</name>
    <name type="common">HIV-1</name>
    <dbReference type="NCBI Taxonomy" id="11696"/>
    <lineage>
        <taxon>Viruses</taxon>
        <taxon>Riboviria</taxon>
        <taxon>Pararnavirae</taxon>
        <taxon>Artverviricota</taxon>
        <taxon>Revtraviricetes</taxon>
        <taxon>Ortervirales</taxon>
        <taxon>Retroviridae</taxon>
        <taxon>Orthoretrovirinae</taxon>
        <taxon>Lentivirus</taxon>
        <taxon>Human immunodeficiency virus type 1</taxon>
    </lineage>
</organism>
<sequence length="96" mass="11344">MEQAPEDQGPQREPYNQWALELLEELKNEAVRHFPRIWLHGLGQHIYETYGDTWAGVEAIIRILQQLLFIHFRIGCRHSRIGIIRQRRARNGASRS</sequence>
<organismHost>
    <name type="scientific">Homo sapiens</name>
    <name type="common">Human</name>
    <dbReference type="NCBI Taxonomy" id="9606"/>
</organismHost>
<reference key="1">
    <citation type="journal article" date="1988" name="Virology">
        <title>Envelope sequences of two new United States HIV-1 isolates.</title>
        <authorList>
            <person name="Gurgo C."/>
            <person name="Guo H.-G."/>
            <person name="Franchini G."/>
            <person name="Aldovini A."/>
            <person name="Collalti E."/>
            <person name="Farrell K."/>
            <person name="Wong-Staal F."/>
            <person name="Gallo R.C."/>
            <person name="Reitz M.S. Jr."/>
        </authorList>
    </citation>
    <scope>NUCLEOTIDE SEQUENCE [GENOMIC RNA]</scope>
</reference>
<proteinExistence type="inferred from homology"/>
<dbReference type="EMBL" id="M17449">
    <property type="protein sequence ID" value="AAA44855.1"/>
    <property type="molecule type" value="Genomic_RNA"/>
</dbReference>
<dbReference type="BMRB" id="P05950"/>
<dbReference type="SMR" id="P05950"/>
<dbReference type="Proteomes" id="UP000007697">
    <property type="component" value="Genome"/>
</dbReference>
<dbReference type="GO" id="GO:0043657">
    <property type="term" value="C:host cell"/>
    <property type="evidence" value="ECO:0007669"/>
    <property type="project" value="GOC"/>
</dbReference>
<dbReference type="GO" id="GO:0042025">
    <property type="term" value="C:host cell nucleus"/>
    <property type="evidence" value="ECO:0007669"/>
    <property type="project" value="UniProtKB-SubCell"/>
</dbReference>
<dbReference type="GO" id="GO:0043655">
    <property type="term" value="C:host extracellular space"/>
    <property type="evidence" value="ECO:0007669"/>
    <property type="project" value="UniProtKB-SubCell"/>
</dbReference>
<dbReference type="GO" id="GO:0044423">
    <property type="term" value="C:virion component"/>
    <property type="evidence" value="ECO:0007669"/>
    <property type="project" value="UniProtKB-UniRule"/>
</dbReference>
<dbReference type="GO" id="GO:0006351">
    <property type="term" value="P:DNA-templated transcription"/>
    <property type="evidence" value="ECO:0007669"/>
    <property type="project" value="UniProtKB-UniRule"/>
</dbReference>
<dbReference type="GO" id="GO:0034220">
    <property type="term" value="P:monoatomic ion transmembrane transport"/>
    <property type="evidence" value="ECO:0007669"/>
    <property type="project" value="UniProtKB-KW"/>
</dbReference>
<dbReference type="GO" id="GO:0051260">
    <property type="term" value="P:protein homooligomerization"/>
    <property type="evidence" value="ECO:0007669"/>
    <property type="project" value="UniProtKB-UniRule"/>
</dbReference>
<dbReference type="GO" id="GO:0006355">
    <property type="term" value="P:regulation of DNA-templated transcription"/>
    <property type="evidence" value="ECO:0007669"/>
    <property type="project" value="UniProtKB-UniRule"/>
</dbReference>
<dbReference type="GO" id="GO:0046718">
    <property type="term" value="P:symbiont entry into host cell"/>
    <property type="evidence" value="ECO:0007669"/>
    <property type="project" value="UniProtKB-KW"/>
</dbReference>
<dbReference type="GO" id="GO:0052151">
    <property type="term" value="P:symbiont-mediated activation of host apoptosis"/>
    <property type="evidence" value="ECO:0007669"/>
    <property type="project" value="UniProtKB-UniRule"/>
</dbReference>
<dbReference type="GO" id="GO:0039592">
    <property type="term" value="P:symbiont-mediated arrest of host cell cycle during G2/M transition"/>
    <property type="evidence" value="ECO:0007669"/>
    <property type="project" value="UniProtKB-UniRule"/>
</dbReference>
<dbReference type="GO" id="GO:0075732">
    <property type="term" value="P:viral penetration into host nucleus"/>
    <property type="evidence" value="ECO:0007669"/>
    <property type="project" value="UniProtKB-UniRule"/>
</dbReference>
<dbReference type="FunFam" id="1.20.5.90:FF:000001">
    <property type="entry name" value="Protein Vpr"/>
    <property type="match status" value="1"/>
</dbReference>
<dbReference type="Gene3D" id="6.10.210.10">
    <property type="match status" value="1"/>
</dbReference>
<dbReference type="Gene3D" id="1.20.5.90">
    <property type="entry name" value="VpR/VpX protein, C-terminal domain"/>
    <property type="match status" value="1"/>
</dbReference>
<dbReference type="HAMAP" id="MF_04080">
    <property type="entry name" value="HIV_VPR"/>
    <property type="match status" value="1"/>
</dbReference>
<dbReference type="InterPro" id="IPR000012">
    <property type="entry name" value="RetroV_VpR/X"/>
</dbReference>
<dbReference type="Pfam" id="PF00522">
    <property type="entry name" value="VPR"/>
    <property type="match status" value="1"/>
</dbReference>
<dbReference type="PRINTS" id="PR00444">
    <property type="entry name" value="HIVVPRVPX"/>
</dbReference>
<comment type="function">
    <text evidence="1">During virus replication, may deplete host UNG protein, and incude G2-M cell cycle arrest. Acts by targeting specific host proteins for degradation by the 26S proteasome, through association with the cellular CUL4A-DDB1 E3 ligase complex by direct interaction with host VPRPB/DCAF-1. Cell cycle arrest reportedly occurs within hours of infection and is not blocked by antiviral agents, suggesting that it is initiated by the VPR carried into the virion. Additionally, VPR induces apoptosis in a cell cycle dependent manner suggesting that these two effects are mechanistically linked. Detected in the serum and cerebrospinal fluid of AIDS patient, VPR may also induce cell death to bystander cells.</text>
</comment>
<comment type="function">
    <text evidence="1">During virus entry, plays a role in the transport of the viral pre-integration (PIC) complex to the host nucleus. This function is crucial for viral infection of non-dividing macrophages. May act directly at the nuclear pore complex, by binding nucleoporins phenylalanine-glycine (FG)-repeat regions.</text>
</comment>
<comment type="subunit">
    <text evidence="1">Homooligomer, may form homodimer. Interacts with p6-gag region of the Pr55 Gag precursor protein through a (Leu-X-X)4 motif near the C-terminus of the P6gag protein. Interacts with host UNG. May interact with host RAD23A/HHR23A. Interacts with host VPRBP/DCAF1, leading to hijack the CUL4A-RBX1-DDB1-DCAF1/VPRBP complex, mediating ubiquitination of host proteins such as TERT and ZGPAT and arrest of the cell cycle in G2 phase.</text>
</comment>
<comment type="subcellular location">
    <subcellularLocation>
        <location evidence="1">Virion</location>
    </subcellularLocation>
    <subcellularLocation>
        <location evidence="1">Host nucleus</location>
    </subcellularLocation>
    <subcellularLocation>
        <location evidence="1">Host extracellular space</location>
    </subcellularLocation>
    <text evidence="1">Incorporation into virion is dependent on p6 GAG sequences. Lacks a canonical nuclear localization signal, thus import into nucleus may function independently of the human importin pathway. Detected in high quantity in the serum and cerebrospinal fluid of AIDS patient.</text>
</comment>
<comment type="PTM">
    <text evidence="1">Phosphorylated on several residues by host. These phosphorylations regulate VPR activity for the nuclear import of the HIV-1 pre-integration complex.</text>
</comment>
<comment type="miscellaneous">
    <text evidence="1">HIV-1 lineages are divided in three main groups, M (for Major), O (for Outlier), and N (for New, or Non-M, Non-O). The vast majority of strains found worldwide belong to the group M. Group O seems to be endemic to and largely confined to Cameroon and neighboring countries in West Central Africa, where these viruses represent a small minority of HIV-1 strains. The group N is represented by a limited number of isolates from Cameroonian persons. The group M is further subdivided in 9 clades or subtypes (A to D, F to H, J and K).</text>
</comment>
<comment type="similarity">
    <text evidence="1">Belongs to the HIV-1 VPR protein family.</text>
</comment>
<keyword id="KW-0010">Activator</keyword>
<keyword id="KW-0014">AIDS</keyword>
<keyword id="KW-0053">Apoptosis</keyword>
<keyword id="KW-0131">Cell cycle</keyword>
<keyword id="KW-1079">Host G2/M cell cycle arrest by virus</keyword>
<keyword id="KW-1048">Host nucleus</keyword>
<keyword id="KW-0945">Host-virus interaction</keyword>
<keyword id="KW-0407">Ion channel</keyword>
<keyword id="KW-0406">Ion transport</keyword>
<keyword id="KW-1121">Modulation of host cell cycle by virus</keyword>
<keyword id="KW-0597">Phosphoprotein</keyword>
<keyword id="KW-1185">Reference proteome</keyword>
<keyword id="KW-0804">Transcription</keyword>
<keyword id="KW-0805">Transcription regulation</keyword>
<keyword id="KW-0813">Transport</keyword>
<keyword id="KW-1163">Viral penetration into host nucleus</keyword>
<keyword id="KW-0946">Virion</keyword>
<keyword id="KW-1160">Virus entry into host cell</keyword>
<gene>
    <name evidence="1" type="primary">vpr</name>
</gene>
<protein>
    <recommendedName>
        <fullName evidence="1">Protein Vpr</fullName>
    </recommendedName>
    <alternativeName>
        <fullName evidence="1">R ORF protein</fullName>
    </alternativeName>
    <alternativeName>
        <fullName evidence="1">Viral protein R</fullName>
    </alternativeName>
</protein>
<name>VPR_HV1MN</name>